<sequence length="304" mass="32377">MVKTAMLGAVALVIALGGTCGVADALPLGQTDDPMIVAHRAGTRDFPENTVLAITNAVAAGVDGMWLTVQVSSDGVPVLYRPSDLATLTDGAGPVNSKTVQQLQQLNAGWNFTTPGVEGHPYRQRATPIPTLEQAIGATPPDMTLFLDLKQTPPQPLVSAVAQVLTRTGAAGRSIVYSTNADITAAASRQEGLQVAESRDVTRQRLFNMALNHHCDPQPDPGKWAGFELHRDVTVTEEFTLGSGISAVNAELWDEASVDCFRSQSGMKVMGFAVKTVDDYRLAHKIGLDAVLVDSPLAAQQWRH</sequence>
<keyword id="KW-1185">Reference proteome</keyword>
<keyword id="KW-0732">Signal</keyword>
<name>Y2277_MYCTO</name>
<proteinExistence type="inferred from homology"/>
<reference key="1">
    <citation type="journal article" date="2002" name="J. Bacteriol.">
        <title>Whole-genome comparison of Mycobacterium tuberculosis clinical and laboratory strains.</title>
        <authorList>
            <person name="Fleischmann R.D."/>
            <person name="Alland D."/>
            <person name="Eisen J.A."/>
            <person name="Carpenter L."/>
            <person name="White O."/>
            <person name="Peterson J.D."/>
            <person name="DeBoy R.T."/>
            <person name="Dodson R.J."/>
            <person name="Gwinn M.L."/>
            <person name="Haft D.H."/>
            <person name="Hickey E.K."/>
            <person name="Kolonay J.F."/>
            <person name="Nelson W.C."/>
            <person name="Umayam L.A."/>
            <person name="Ermolaeva M.D."/>
            <person name="Salzberg S.L."/>
            <person name="Delcher A."/>
            <person name="Utterback T.R."/>
            <person name="Weidman J.F."/>
            <person name="Khouri H.M."/>
            <person name="Gill J."/>
            <person name="Mikula A."/>
            <person name="Bishai W."/>
            <person name="Jacobs W.R. Jr."/>
            <person name="Venter J.C."/>
            <person name="Fraser C.M."/>
        </authorList>
    </citation>
    <scope>NUCLEOTIDE SEQUENCE [LARGE SCALE GENOMIC DNA]</scope>
    <source>
        <strain>CDC 1551 / Oshkosh</strain>
    </source>
</reference>
<evidence type="ECO:0000255" key="1"/>
<accession>P9WLF0</accession>
<accession>L0T953</accession>
<accession>Q50687</accession>
<protein>
    <recommendedName>
        <fullName>Uncharacterized protein MT2337</fullName>
    </recommendedName>
</protein>
<feature type="signal peptide" evidence="1">
    <location>
        <begin position="1"/>
        <end position="25"/>
    </location>
</feature>
<feature type="chain" id="PRO_0000427490" description="Uncharacterized protein MT2337">
    <location>
        <begin position="26"/>
        <end position="304"/>
    </location>
</feature>
<feature type="domain" description="GP-PDE">
    <location>
        <begin position="34"/>
        <end position="303"/>
    </location>
</feature>
<gene>
    <name type="ordered locus">MT2337</name>
</gene>
<dbReference type="EMBL" id="AE000516">
    <property type="protein sequence ID" value="AAK46621.1"/>
    <property type="molecule type" value="Genomic_DNA"/>
</dbReference>
<dbReference type="PIR" id="A70731">
    <property type="entry name" value="A70731"/>
</dbReference>
<dbReference type="SMR" id="P9WLF0"/>
<dbReference type="KEGG" id="mtc:MT2337"/>
<dbReference type="PATRIC" id="fig|83331.31.peg.2514"/>
<dbReference type="HOGENOM" id="CLU_030006_0_0_11"/>
<dbReference type="Proteomes" id="UP000001020">
    <property type="component" value="Chromosome"/>
</dbReference>
<dbReference type="GO" id="GO:0008081">
    <property type="term" value="F:phosphoric diester hydrolase activity"/>
    <property type="evidence" value="ECO:0007669"/>
    <property type="project" value="InterPro"/>
</dbReference>
<dbReference type="GO" id="GO:0006629">
    <property type="term" value="P:lipid metabolic process"/>
    <property type="evidence" value="ECO:0007669"/>
    <property type="project" value="InterPro"/>
</dbReference>
<dbReference type="CDD" id="cd08580">
    <property type="entry name" value="GDPD_Rv2277c_like"/>
    <property type="match status" value="1"/>
</dbReference>
<dbReference type="Gene3D" id="3.20.20.190">
    <property type="entry name" value="Phosphatidylinositol (PI) phosphodiesterase"/>
    <property type="match status" value="1"/>
</dbReference>
<dbReference type="InterPro" id="IPR030395">
    <property type="entry name" value="GP_PDE_dom"/>
</dbReference>
<dbReference type="InterPro" id="IPR017946">
    <property type="entry name" value="PLC-like_Pdiesterase_TIM-brl"/>
</dbReference>
<dbReference type="PANTHER" id="PTHR46211:SF10">
    <property type="entry name" value="EXPORTED PROTEIN"/>
    <property type="match status" value="1"/>
</dbReference>
<dbReference type="PANTHER" id="PTHR46211">
    <property type="entry name" value="GLYCEROPHOSPHORYL DIESTER PHOSPHODIESTERASE"/>
    <property type="match status" value="1"/>
</dbReference>
<dbReference type="Pfam" id="PF03009">
    <property type="entry name" value="GDPD"/>
    <property type="match status" value="1"/>
</dbReference>
<dbReference type="SUPFAM" id="SSF51695">
    <property type="entry name" value="PLC-like phosphodiesterases"/>
    <property type="match status" value="1"/>
</dbReference>
<dbReference type="PROSITE" id="PS51704">
    <property type="entry name" value="GP_PDE"/>
    <property type="match status" value="1"/>
</dbReference>
<organism>
    <name type="scientific">Mycobacterium tuberculosis (strain CDC 1551 / Oshkosh)</name>
    <dbReference type="NCBI Taxonomy" id="83331"/>
    <lineage>
        <taxon>Bacteria</taxon>
        <taxon>Bacillati</taxon>
        <taxon>Actinomycetota</taxon>
        <taxon>Actinomycetes</taxon>
        <taxon>Mycobacteriales</taxon>
        <taxon>Mycobacteriaceae</taxon>
        <taxon>Mycobacterium</taxon>
        <taxon>Mycobacterium tuberculosis complex</taxon>
    </lineage>
</organism>